<dbReference type="EMBL" id="AF250878">
    <property type="protein sequence ID" value="AAF70002.1"/>
    <property type="molecule type" value="Genomic_DNA"/>
</dbReference>
<dbReference type="RefSeq" id="NP_058377.1">
    <property type="nucleotide sequence ID" value="NC_002305.1"/>
</dbReference>
<dbReference type="RefSeq" id="WP_010892345.1">
    <property type="nucleotide sequence ID" value="NC_002305.1"/>
</dbReference>
<dbReference type="SMR" id="Q9L5H8"/>
<dbReference type="GO" id="GO:0005829">
    <property type="term" value="C:cytosol"/>
    <property type="evidence" value="ECO:0007669"/>
    <property type="project" value="TreeGrafter"/>
</dbReference>
<dbReference type="GO" id="GO:0009295">
    <property type="term" value="C:nucleoid"/>
    <property type="evidence" value="ECO:0007669"/>
    <property type="project" value="UniProtKB-SubCell"/>
</dbReference>
<dbReference type="GO" id="GO:0032993">
    <property type="term" value="C:protein-DNA complex"/>
    <property type="evidence" value="ECO:0007669"/>
    <property type="project" value="TreeGrafter"/>
</dbReference>
<dbReference type="GO" id="GO:0003681">
    <property type="term" value="F:bent DNA binding"/>
    <property type="evidence" value="ECO:0007669"/>
    <property type="project" value="TreeGrafter"/>
</dbReference>
<dbReference type="GO" id="GO:0001217">
    <property type="term" value="F:DNA-binding transcription repressor activity"/>
    <property type="evidence" value="ECO:0007669"/>
    <property type="project" value="TreeGrafter"/>
</dbReference>
<dbReference type="GO" id="GO:0003680">
    <property type="term" value="F:minor groove of adenine-thymine-rich DNA binding"/>
    <property type="evidence" value="ECO:0007669"/>
    <property type="project" value="TreeGrafter"/>
</dbReference>
<dbReference type="GO" id="GO:0046983">
    <property type="term" value="F:protein dimerization activity"/>
    <property type="evidence" value="ECO:0007669"/>
    <property type="project" value="InterPro"/>
</dbReference>
<dbReference type="GO" id="GO:0030527">
    <property type="term" value="F:structural constituent of chromatin"/>
    <property type="evidence" value="ECO:0007669"/>
    <property type="project" value="InterPro"/>
</dbReference>
<dbReference type="GO" id="GO:0000976">
    <property type="term" value="F:transcription cis-regulatory region binding"/>
    <property type="evidence" value="ECO:0007669"/>
    <property type="project" value="TreeGrafter"/>
</dbReference>
<dbReference type="FunFam" id="1.10.287.1050:FF:000001">
    <property type="entry name" value="DNA-binding protein"/>
    <property type="match status" value="1"/>
</dbReference>
<dbReference type="FunFam" id="4.10.430.10:FF:000001">
    <property type="entry name" value="DNA-binding protein"/>
    <property type="match status" value="1"/>
</dbReference>
<dbReference type="Gene3D" id="1.10.287.1050">
    <property type="entry name" value="H-NS histone-like proteins"/>
    <property type="match status" value="1"/>
</dbReference>
<dbReference type="Gene3D" id="4.10.430.10">
    <property type="entry name" value="Histone-like protein H-NS, C-terminal domain"/>
    <property type="match status" value="1"/>
</dbReference>
<dbReference type="InterPro" id="IPR054180">
    <property type="entry name" value="H-NS-like_N"/>
</dbReference>
<dbReference type="InterPro" id="IPR027444">
    <property type="entry name" value="H-NS_C_dom"/>
</dbReference>
<dbReference type="InterPro" id="IPR037150">
    <property type="entry name" value="H-NS_C_dom_sf"/>
</dbReference>
<dbReference type="InterPro" id="IPR001801">
    <property type="entry name" value="Histone_HNS"/>
</dbReference>
<dbReference type="InterPro" id="IPR027454">
    <property type="entry name" value="Histone_HNS_N"/>
</dbReference>
<dbReference type="PANTHER" id="PTHR38097">
    <property type="match status" value="1"/>
</dbReference>
<dbReference type="PANTHER" id="PTHR38097:SF2">
    <property type="entry name" value="DNA-BINDING PROTEIN STPA"/>
    <property type="match status" value="1"/>
</dbReference>
<dbReference type="Pfam" id="PF00816">
    <property type="entry name" value="Histone_HNS"/>
    <property type="match status" value="1"/>
</dbReference>
<dbReference type="Pfam" id="PF22470">
    <property type="entry name" value="Histone_HNS_N"/>
    <property type="match status" value="1"/>
</dbReference>
<dbReference type="PIRSF" id="PIRSF002096">
    <property type="entry name" value="HnS"/>
    <property type="match status" value="1"/>
</dbReference>
<dbReference type="SMART" id="SM00528">
    <property type="entry name" value="HNS"/>
    <property type="match status" value="1"/>
</dbReference>
<dbReference type="SUPFAM" id="SSF81273">
    <property type="entry name" value="H-NS histone-like proteins"/>
    <property type="match status" value="2"/>
</dbReference>
<proteinExistence type="evidence at protein level"/>
<feature type="chain" id="PRO_0000436895" description="DNA-binding protein H-NS, plasmid">
    <location>
        <begin position="1"/>
        <end position="134"/>
    </location>
</feature>
<feature type="DNA-binding region" evidence="1">
    <location>
        <begin position="112"/>
        <end position="117"/>
    </location>
</feature>
<feature type="region of interest" description="Disordered" evidence="4">
    <location>
        <begin position="77"/>
        <end position="96"/>
    </location>
</feature>
<feature type="coiled-coil region" evidence="3">
    <location>
        <begin position="23"/>
        <end position="67"/>
    </location>
</feature>
<sequence>MSEALKSLNNIRTLRAQGRELPLEILEELLEKLSVVVEERRQEESSKEAELKARLEKIESLRQLMLEDGIDPEELLSSFSAKSGAPKKVREPRPAKYKYTDVNGETKTWTGQGRTPKALAEQLEAGKKLDDFLI</sequence>
<organism>
    <name type="scientific">Salmonella typhi</name>
    <dbReference type="NCBI Taxonomy" id="90370"/>
    <lineage>
        <taxon>Bacteria</taxon>
        <taxon>Pseudomonadati</taxon>
        <taxon>Pseudomonadota</taxon>
        <taxon>Gammaproteobacteria</taxon>
        <taxon>Enterobacterales</taxon>
        <taxon>Enterobacteriaceae</taxon>
        <taxon>Salmonella</taxon>
    </lineage>
</organism>
<evidence type="ECO:0000250" key="1">
    <source>
        <dbReference type="UniProtKB" id="P0A1S2"/>
    </source>
</evidence>
<evidence type="ECO:0000250" key="2">
    <source>
        <dbReference type="UniProtKB" id="P0ACF8"/>
    </source>
</evidence>
<evidence type="ECO:0000255" key="3"/>
<evidence type="ECO:0000256" key="4">
    <source>
        <dbReference type="SAM" id="MobiDB-lite"/>
    </source>
</evidence>
<evidence type="ECO:0000269" key="5">
    <source>
    </source>
</evidence>
<evidence type="ECO:0000303" key="6">
    <source>
    </source>
</evidence>
<evidence type="ECO:0000305" key="7">
    <source>
    </source>
</evidence>
<accession>Q9L5H8</accession>
<reference key="1">
    <citation type="journal article" date="2000" name="Nucleic Acids Res.">
        <title>The complete DNA sequence and analysis of R27, a large IncHI plasmid from Salmonella typhi that is temperature sensitive for transfer.</title>
        <authorList>
            <person name="Sherburne C.K."/>
            <person name="Lawley T.D."/>
            <person name="Gilmour M.W."/>
            <person name="Blattner F.R."/>
            <person name="Burland V."/>
            <person name="Grotbeck E."/>
            <person name="Rose D.J."/>
            <person name="Taylor D.E."/>
        </authorList>
    </citation>
    <scope>NUCLEOTIDE SEQUENCE [GENOMIC DNA]</scope>
    <source>
        <plasmid>IncHI1 R27</plasmid>
    </source>
</reference>
<reference key="2">
    <citation type="journal article" date="2009" name="PLoS Genet.">
        <title>Differential regulation of horizontally acquired and core genome genes by the bacterial modulator H-NS.</title>
        <authorList>
            <person name="Banos R.C."/>
            <person name="Vivero A."/>
            <person name="Aznar S."/>
            <person name="Garcia J."/>
            <person name="Pons M."/>
            <person name="Madrid C."/>
            <person name="Juarez A."/>
        </authorList>
    </citation>
    <scope>FUNCTION</scope>
    <scope>DNA-BINDING</scope>
    <source>
        <plasmid>IncHI1 R27</plasmid>
    </source>
</reference>
<geneLocation type="plasmid">
    <name>IncHI1 R27</name>
</geneLocation>
<gene>
    <name type="primary">hns</name>
</gene>
<keyword id="KW-0175">Coiled coil</keyword>
<keyword id="KW-0963">Cytoplasm</keyword>
<keyword id="KW-0238">DNA-binding</keyword>
<keyword id="KW-0614">Plasmid</keyword>
<keyword id="KW-0678">Repressor</keyword>
<keyword id="KW-0804">Transcription</keyword>
<keyword id="KW-0805">Transcription regulation</keyword>
<comment type="function">
    <text evidence="2 5">A DNA-binding protein implicated in transcriptional repression and chromosome organization and compaction. Binds DNA, modifying gene expression, especially non-core genes. Does not regulate the same set of genes as its chromosomal counterpart (tested in S.typhimurium strain SL1344 / SV5015, chromosomal H-NS protein is AC A0A0H3NBY9). Thus it has a not-completely overlapping set of gene targets compared to its chromosomal homolog; many of these target genes are either plasmid-encoded or acquired by horizontally transferred genes (HTG). This protein can function in the absence of H-NS-modulating protein Hha (either chromosomal or plasmid-encoded), although many HTG genes are regulated by an H-NS/Hha complex (PubMed:19521501). Binds nucleation sites in AT-rich DNA and bridges them, forming higher-order nucleoprotein complexes and condensing the chromosome (By similarity). A subset of genes are repressed by H-NS in association with Hha and/or Cnu (ydgT) (By similarity).</text>
</comment>
<comment type="subunit">
    <text evidence="2">Homodimer that oligomerizes on DNA into higher-order complexes that form bridges between disparate regions of DNA compacting it. Interacts with Hha, YdgT and StpA.</text>
</comment>
<comment type="subcellular location">
    <subcellularLocation>
        <location evidence="2">Cytoplasm</location>
        <location evidence="2">Nucleoid</location>
    </subcellularLocation>
</comment>
<comment type="miscellaneous">
    <text evidence="7">This protein is encoded on incompatibility group H (IncHI) plasmid R27, a temperature-sensitive conjugative plasmid.</text>
</comment>
<comment type="similarity">
    <text>Belongs to the histone-like protein H-NS family.</text>
</comment>
<name>HNSP_SALTI</name>
<protein>
    <recommendedName>
        <fullName>DNA-binding protein H-NS, plasmid</fullName>
    </recommendedName>
    <alternativeName>
        <fullName evidence="6">Plasmid R27-encoded H-HS</fullName>
        <shortName evidence="6">H-NS-R27</shortName>
    </alternativeName>
</protein>